<sequence length="651" mass="72073">MSDKIYYVPSEWAQKAYVDDAHYQSMYAASVNDPHAFWGEHGKRIDWFTPYTKVKNTSFDPGHVSIKWFEDGITNVAYNCVDRHLETRGDQVAIIWEGDSPDESRNITYRELSSEVNKLANVLRNRGVEKGDRVTIYLPMIPEAAFAMLACARLGAIHSIVFGGFSPDSLAGRVADCGSKCIITADEGLRGGRKVPLKANVDAAIAQINGGVDHVIVVRRTGGKVDMLPGRDVYYDEATAMVTDECPAEHVNAEDPLFILYTSGSTGKPKGVLHTTGGYLVYASMTHQYIFDYHPGDIYWCTADVGWVTGHSYIVYGPLANGATTLMFEGIPNYPSVSRFWDVIDKHKVNIFYTAPTAIRSLMQAGEEPVKRTSRSSLRLLGSVGEPINPEAWEWYYRVVGEERCPIVDTWWQTETGGILITPLPGATKLKPGSATRPFFGVMPEVVDAEGKVLEGACEGNLVIADSWPGQMRTVYGDHERFEQTYFSTYPGKYFTGDGCRRDADGFYWITGRVDDVINVSGHRMGTAEVESALVAHPKVSEAAVVGFPHDIKGQGIYAYVTLMDGEEPTEELRKELVGWVRREIGPIASPDLIQFAPGLPKTRSGKIMRRILRKIAEDQFESLGDTSTLADPGVVEDLIHNRQNKRDAAA</sequence>
<feature type="chain" id="PRO_1000137279" description="Acetyl-coenzyme A synthetase">
    <location>
        <begin position="1"/>
        <end position="651"/>
    </location>
</feature>
<feature type="binding site" evidence="1">
    <location>
        <begin position="190"/>
        <end position="193"/>
    </location>
    <ligand>
        <name>CoA</name>
        <dbReference type="ChEBI" id="CHEBI:57287"/>
    </ligand>
</feature>
<feature type="binding site" evidence="1">
    <location>
        <position position="309"/>
    </location>
    <ligand>
        <name>CoA</name>
        <dbReference type="ChEBI" id="CHEBI:57287"/>
    </ligand>
</feature>
<feature type="binding site" evidence="1">
    <location>
        <position position="333"/>
    </location>
    <ligand>
        <name>CoA</name>
        <dbReference type="ChEBI" id="CHEBI:57287"/>
    </ligand>
</feature>
<feature type="binding site" evidence="1">
    <location>
        <begin position="385"/>
        <end position="387"/>
    </location>
    <ligand>
        <name>ATP</name>
        <dbReference type="ChEBI" id="CHEBI:30616"/>
    </ligand>
</feature>
<feature type="binding site" evidence="1">
    <location>
        <begin position="409"/>
        <end position="414"/>
    </location>
    <ligand>
        <name>ATP</name>
        <dbReference type="ChEBI" id="CHEBI:30616"/>
    </ligand>
</feature>
<feature type="binding site" evidence="1">
    <location>
        <position position="498"/>
    </location>
    <ligand>
        <name>ATP</name>
        <dbReference type="ChEBI" id="CHEBI:30616"/>
    </ligand>
</feature>
<feature type="binding site" evidence="1">
    <location>
        <position position="513"/>
    </location>
    <ligand>
        <name>ATP</name>
        <dbReference type="ChEBI" id="CHEBI:30616"/>
    </ligand>
</feature>
<feature type="binding site" evidence="1">
    <location>
        <position position="521"/>
    </location>
    <ligand>
        <name>CoA</name>
        <dbReference type="ChEBI" id="CHEBI:57287"/>
    </ligand>
</feature>
<feature type="binding site" evidence="1">
    <location>
        <position position="524"/>
    </location>
    <ligand>
        <name>ATP</name>
        <dbReference type="ChEBI" id="CHEBI:30616"/>
    </ligand>
</feature>
<feature type="binding site" evidence="1">
    <location>
        <position position="535"/>
    </location>
    <ligand>
        <name>Mg(2+)</name>
        <dbReference type="ChEBI" id="CHEBI:18420"/>
    </ligand>
</feature>
<feature type="binding site" evidence="1">
    <location>
        <position position="537"/>
    </location>
    <ligand>
        <name>Mg(2+)</name>
        <dbReference type="ChEBI" id="CHEBI:18420"/>
    </ligand>
</feature>
<feature type="binding site" evidence="1">
    <location>
        <position position="540"/>
    </location>
    <ligand>
        <name>Mg(2+)</name>
        <dbReference type="ChEBI" id="CHEBI:18420"/>
    </ligand>
</feature>
<feature type="binding site" evidence="1">
    <location>
        <position position="582"/>
    </location>
    <ligand>
        <name>CoA</name>
        <dbReference type="ChEBI" id="CHEBI:57287"/>
    </ligand>
</feature>
<feature type="modified residue" description="N6-acetyllysine" evidence="1">
    <location>
        <position position="607"/>
    </location>
</feature>
<organism>
    <name type="scientific">Xanthobacter autotrophicus (strain ATCC BAA-1158 / Py2)</name>
    <dbReference type="NCBI Taxonomy" id="78245"/>
    <lineage>
        <taxon>Bacteria</taxon>
        <taxon>Pseudomonadati</taxon>
        <taxon>Pseudomonadota</taxon>
        <taxon>Alphaproteobacteria</taxon>
        <taxon>Hyphomicrobiales</taxon>
        <taxon>Xanthobacteraceae</taxon>
        <taxon>Xanthobacter</taxon>
    </lineage>
</organism>
<name>ACSA_XANP2</name>
<dbReference type="EC" id="6.2.1.1" evidence="1"/>
<dbReference type="EMBL" id="CP000781">
    <property type="protein sequence ID" value="ABS66727.1"/>
    <property type="molecule type" value="Genomic_DNA"/>
</dbReference>
<dbReference type="SMR" id="A7IFD4"/>
<dbReference type="STRING" id="78245.Xaut_1479"/>
<dbReference type="KEGG" id="xau:Xaut_1479"/>
<dbReference type="eggNOG" id="COG0365">
    <property type="taxonomic scope" value="Bacteria"/>
</dbReference>
<dbReference type="HOGENOM" id="CLU_000022_3_6_5"/>
<dbReference type="OrthoDB" id="9803968at2"/>
<dbReference type="PhylomeDB" id="A7IFD4"/>
<dbReference type="Proteomes" id="UP000002417">
    <property type="component" value="Chromosome"/>
</dbReference>
<dbReference type="GO" id="GO:0005829">
    <property type="term" value="C:cytosol"/>
    <property type="evidence" value="ECO:0007669"/>
    <property type="project" value="TreeGrafter"/>
</dbReference>
<dbReference type="GO" id="GO:0003987">
    <property type="term" value="F:acetate-CoA ligase activity"/>
    <property type="evidence" value="ECO:0007669"/>
    <property type="project" value="UniProtKB-UniRule"/>
</dbReference>
<dbReference type="GO" id="GO:0016208">
    <property type="term" value="F:AMP binding"/>
    <property type="evidence" value="ECO:0007669"/>
    <property type="project" value="InterPro"/>
</dbReference>
<dbReference type="GO" id="GO:0005524">
    <property type="term" value="F:ATP binding"/>
    <property type="evidence" value="ECO:0007669"/>
    <property type="project" value="UniProtKB-KW"/>
</dbReference>
<dbReference type="GO" id="GO:0046872">
    <property type="term" value="F:metal ion binding"/>
    <property type="evidence" value="ECO:0007669"/>
    <property type="project" value="UniProtKB-KW"/>
</dbReference>
<dbReference type="GO" id="GO:0019427">
    <property type="term" value="P:acetyl-CoA biosynthetic process from acetate"/>
    <property type="evidence" value="ECO:0007669"/>
    <property type="project" value="InterPro"/>
</dbReference>
<dbReference type="CDD" id="cd05966">
    <property type="entry name" value="ACS"/>
    <property type="match status" value="1"/>
</dbReference>
<dbReference type="FunFam" id="3.30.300.30:FF:000004">
    <property type="entry name" value="Acetyl-coenzyme A synthetase"/>
    <property type="match status" value="1"/>
</dbReference>
<dbReference type="FunFam" id="3.40.50.12780:FF:000001">
    <property type="entry name" value="Acetyl-coenzyme A synthetase"/>
    <property type="match status" value="1"/>
</dbReference>
<dbReference type="Gene3D" id="3.30.300.30">
    <property type="match status" value="1"/>
</dbReference>
<dbReference type="Gene3D" id="3.40.50.12780">
    <property type="entry name" value="N-terminal domain of ligase-like"/>
    <property type="match status" value="1"/>
</dbReference>
<dbReference type="HAMAP" id="MF_01123">
    <property type="entry name" value="Ac_CoA_synth"/>
    <property type="match status" value="1"/>
</dbReference>
<dbReference type="InterPro" id="IPR011904">
    <property type="entry name" value="Ac_CoA_lig"/>
</dbReference>
<dbReference type="InterPro" id="IPR032387">
    <property type="entry name" value="ACAS_N"/>
</dbReference>
<dbReference type="InterPro" id="IPR025110">
    <property type="entry name" value="AMP-bd_C"/>
</dbReference>
<dbReference type="InterPro" id="IPR045851">
    <property type="entry name" value="AMP-bd_C_sf"/>
</dbReference>
<dbReference type="InterPro" id="IPR020845">
    <property type="entry name" value="AMP-binding_CS"/>
</dbReference>
<dbReference type="InterPro" id="IPR000873">
    <property type="entry name" value="AMP-dep_synth/lig_dom"/>
</dbReference>
<dbReference type="InterPro" id="IPR042099">
    <property type="entry name" value="ANL_N_sf"/>
</dbReference>
<dbReference type="NCBIfam" id="TIGR02188">
    <property type="entry name" value="Ac_CoA_lig_AcsA"/>
    <property type="match status" value="1"/>
</dbReference>
<dbReference type="NCBIfam" id="NF001208">
    <property type="entry name" value="PRK00174.1"/>
    <property type="match status" value="1"/>
</dbReference>
<dbReference type="PANTHER" id="PTHR24095">
    <property type="entry name" value="ACETYL-COENZYME A SYNTHETASE"/>
    <property type="match status" value="1"/>
</dbReference>
<dbReference type="PANTHER" id="PTHR24095:SF14">
    <property type="entry name" value="ACETYL-COENZYME A SYNTHETASE 1"/>
    <property type="match status" value="1"/>
</dbReference>
<dbReference type="Pfam" id="PF16177">
    <property type="entry name" value="ACAS_N"/>
    <property type="match status" value="1"/>
</dbReference>
<dbReference type="Pfam" id="PF00501">
    <property type="entry name" value="AMP-binding"/>
    <property type="match status" value="1"/>
</dbReference>
<dbReference type="Pfam" id="PF13193">
    <property type="entry name" value="AMP-binding_C"/>
    <property type="match status" value="1"/>
</dbReference>
<dbReference type="SUPFAM" id="SSF56801">
    <property type="entry name" value="Acetyl-CoA synthetase-like"/>
    <property type="match status" value="1"/>
</dbReference>
<dbReference type="PROSITE" id="PS00455">
    <property type="entry name" value="AMP_BINDING"/>
    <property type="match status" value="1"/>
</dbReference>
<reference key="1">
    <citation type="submission" date="2007-07" db="EMBL/GenBank/DDBJ databases">
        <title>Complete sequence of chromosome of Xanthobacter autotrophicus Py2.</title>
        <authorList>
            <consortium name="US DOE Joint Genome Institute"/>
            <person name="Copeland A."/>
            <person name="Lucas S."/>
            <person name="Lapidus A."/>
            <person name="Barry K."/>
            <person name="Glavina del Rio T."/>
            <person name="Hammon N."/>
            <person name="Israni S."/>
            <person name="Dalin E."/>
            <person name="Tice H."/>
            <person name="Pitluck S."/>
            <person name="Sims D."/>
            <person name="Brettin T."/>
            <person name="Bruce D."/>
            <person name="Detter J.C."/>
            <person name="Han C."/>
            <person name="Tapia R."/>
            <person name="Brainard J."/>
            <person name="Schmutz J."/>
            <person name="Larimer F."/>
            <person name="Land M."/>
            <person name="Hauser L."/>
            <person name="Kyrpides N."/>
            <person name="Kim E."/>
            <person name="Ensigns S.A."/>
            <person name="Richardson P."/>
        </authorList>
    </citation>
    <scope>NUCLEOTIDE SEQUENCE [LARGE SCALE GENOMIC DNA]</scope>
    <source>
        <strain>ATCC BAA-1158 / Py2</strain>
    </source>
</reference>
<comment type="function">
    <text evidence="1">Catalyzes the conversion of acetate into acetyl-CoA (AcCoA), an essential intermediate at the junction of anabolic and catabolic pathways. AcsA undergoes a two-step reaction. In the first half reaction, AcsA combines acetate with ATP to form acetyl-adenylate (AcAMP) intermediate. In the second half reaction, it can then transfer the acetyl group from AcAMP to the sulfhydryl group of CoA, forming the product AcCoA.</text>
</comment>
<comment type="catalytic activity">
    <reaction evidence="1">
        <text>acetate + ATP + CoA = acetyl-CoA + AMP + diphosphate</text>
        <dbReference type="Rhea" id="RHEA:23176"/>
        <dbReference type="ChEBI" id="CHEBI:30089"/>
        <dbReference type="ChEBI" id="CHEBI:30616"/>
        <dbReference type="ChEBI" id="CHEBI:33019"/>
        <dbReference type="ChEBI" id="CHEBI:57287"/>
        <dbReference type="ChEBI" id="CHEBI:57288"/>
        <dbReference type="ChEBI" id="CHEBI:456215"/>
        <dbReference type="EC" id="6.2.1.1"/>
    </reaction>
</comment>
<comment type="cofactor">
    <cofactor evidence="1">
        <name>Mg(2+)</name>
        <dbReference type="ChEBI" id="CHEBI:18420"/>
    </cofactor>
</comment>
<comment type="PTM">
    <text evidence="1">Acetylated. Deacetylation by the SIR2-homolog deacetylase activates the enzyme.</text>
</comment>
<comment type="similarity">
    <text evidence="1">Belongs to the ATP-dependent AMP-binding enzyme family.</text>
</comment>
<gene>
    <name evidence="1" type="primary">acsA</name>
    <name type="ordered locus">Xaut_1479</name>
</gene>
<keyword id="KW-0007">Acetylation</keyword>
<keyword id="KW-0067">ATP-binding</keyword>
<keyword id="KW-0436">Ligase</keyword>
<keyword id="KW-0460">Magnesium</keyword>
<keyword id="KW-0479">Metal-binding</keyword>
<keyword id="KW-0547">Nucleotide-binding</keyword>
<keyword id="KW-1185">Reference proteome</keyword>
<accession>A7IFD4</accession>
<evidence type="ECO:0000255" key="1">
    <source>
        <dbReference type="HAMAP-Rule" id="MF_01123"/>
    </source>
</evidence>
<protein>
    <recommendedName>
        <fullName evidence="1">Acetyl-coenzyme A synthetase</fullName>
        <shortName evidence="1">AcCoA synthetase</shortName>
        <shortName evidence="1">Acs</shortName>
        <ecNumber evidence="1">6.2.1.1</ecNumber>
    </recommendedName>
    <alternativeName>
        <fullName evidence="1">Acetate--CoA ligase</fullName>
    </alternativeName>
    <alternativeName>
        <fullName evidence="1">Acyl-activating enzyme</fullName>
    </alternativeName>
</protein>
<proteinExistence type="inferred from homology"/>